<protein>
    <recommendedName>
        <fullName evidence="1">Octanoyltransferase</fullName>
        <ecNumber evidence="1">2.3.1.181</ecNumber>
    </recommendedName>
    <alternativeName>
        <fullName evidence="1">Lipoate-protein ligase B</fullName>
    </alternativeName>
    <alternativeName>
        <fullName evidence="1">Lipoyl/octanoyl transferase</fullName>
    </alternativeName>
    <alternativeName>
        <fullName evidence="1">Octanoyl-[acyl-carrier-protein]-protein N-octanoyltransferase</fullName>
    </alternativeName>
</protein>
<feature type="chain" id="PRO_1000073997" description="Octanoyltransferase">
    <location>
        <begin position="1"/>
        <end position="232"/>
    </location>
</feature>
<feature type="domain" description="BPL/LPL catalytic" evidence="2">
    <location>
        <begin position="33"/>
        <end position="216"/>
    </location>
</feature>
<feature type="active site" description="Acyl-thioester intermediate" evidence="1">
    <location>
        <position position="177"/>
    </location>
</feature>
<feature type="binding site" evidence="1">
    <location>
        <begin position="71"/>
        <end position="78"/>
    </location>
    <ligand>
        <name>substrate</name>
    </ligand>
</feature>
<feature type="binding site" evidence="1">
    <location>
        <begin position="146"/>
        <end position="148"/>
    </location>
    <ligand>
        <name>substrate</name>
    </ligand>
</feature>
<feature type="binding site" evidence="1">
    <location>
        <begin position="159"/>
        <end position="161"/>
    </location>
    <ligand>
        <name>substrate</name>
    </ligand>
</feature>
<feature type="site" description="Lowers pKa of active site Cys" evidence="1">
    <location>
        <position position="143"/>
    </location>
</feature>
<organism>
    <name type="scientific">Clavibacter sepedonicus</name>
    <name type="common">Clavibacter michiganensis subsp. sepedonicus</name>
    <dbReference type="NCBI Taxonomy" id="31964"/>
    <lineage>
        <taxon>Bacteria</taxon>
        <taxon>Bacillati</taxon>
        <taxon>Actinomycetota</taxon>
        <taxon>Actinomycetes</taxon>
        <taxon>Micrococcales</taxon>
        <taxon>Microbacteriaceae</taxon>
        <taxon>Clavibacter</taxon>
    </lineage>
</organism>
<comment type="function">
    <text evidence="1">Catalyzes the transfer of endogenously produced octanoic acid from octanoyl-acyl-carrier-protein onto the lipoyl domains of lipoate-dependent enzymes. Lipoyl-ACP can also act as a substrate although octanoyl-ACP is likely to be the physiological substrate.</text>
</comment>
<comment type="catalytic activity">
    <reaction evidence="1">
        <text>octanoyl-[ACP] + L-lysyl-[protein] = N(6)-octanoyl-L-lysyl-[protein] + holo-[ACP] + H(+)</text>
        <dbReference type="Rhea" id="RHEA:17665"/>
        <dbReference type="Rhea" id="RHEA-COMP:9636"/>
        <dbReference type="Rhea" id="RHEA-COMP:9685"/>
        <dbReference type="Rhea" id="RHEA-COMP:9752"/>
        <dbReference type="Rhea" id="RHEA-COMP:9928"/>
        <dbReference type="ChEBI" id="CHEBI:15378"/>
        <dbReference type="ChEBI" id="CHEBI:29969"/>
        <dbReference type="ChEBI" id="CHEBI:64479"/>
        <dbReference type="ChEBI" id="CHEBI:78463"/>
        <dbReference type="ChEBI" id="CHEBI:78809"/>
        <dbReference type="EC" id="2.3.1.181"/>
    </reaction>
</comment>
<comment type="pathway">
    <text evidence="1">Protein modification; protein lipoylation via endogenous pathway; protein N(6)-(lipoyl)lysine from octanoyl-[acyl-carrier-protein]: step 1/2.</text>
</comment>
<comment type="subcellular location">
    <subcellularLocation>
        <location evidence="1">Cytoplasm</location>
    </subcellularLocation>
</comment>
<comment type="miscellaneous">
    <text evidence="1">In the reaction, the free carboxyl group of octanoic acid is attached via an amide linkage to the epsilon-amino group of a specific lysine residue of lipoyl domains of lipoate-dependent enzymes.</text>
</comment>
<comment type="similarity">
    <text evidence="1">Belongs to the LipB family.</text>
</comment>
<accession>B0RE23</accession>
<name>LIPB_CLASE</name>
<dbReference type="EC" id="2.3.1.181" evidence="1"/>
<dbReference type="EMBL" id="AM849034">
    <property type="protein sequence ID" value="CAQ01984.1"/>
    <property type="molecule type" value="Genomic_DNA"/>
</dbReference>
<dbReference type="RefSeq" id="WP_012299220.1">
    <property type="nucleotide sequence ID" value="NZ_MZMN01000003.1"/>
</dbReference>
<dbReference type="SMR" id="B0RE23"/>
<dbReference type="STRING" id="31964.CMS1882"/>
<dbReference type="KEGG" id="cms:CMS1882"/>
<dbReference type="eggNOG" id="COG0321">
    <property type="taxonomic scope" value="Bacteria"/>
</dbReference>
<dbReference type="HOGENOM" id="CLU_035168_2_1_11"/>
<dbReference type="OrthoDB" id="9787061at2"/>
<dbReference type="UniPathway" id="UPA00538">
    <property type="reaction ID" value="UER00592"/>
</dbReference>
<dbReference type="Proteomes" id="UP000001318">
    <property type="component" value="Chromosome"/>
</dbReference>
<dbReference type="GO" id="GO:0005737">
    <property type="term" value="C:cytoplasm"/>
    <property type="evidence" value="ECO:0007669"/>
    <property type="project" value="UniProtKB-SubCell"/>
</dbReference>
<dbReference type="GO" id="GO:0033819">
    <property type="term" value="F:lipoyl(octanoyl) transferase activity"/>
    <property type="evidence" value="ECO:0007669"/>
    <property type="project" value="UniProtKB-EC"/>
</dbReference>
<dbReference type="GO" id="GO:0036211">
    <property type="term" value="P:protein modification process"/>
    <property type="evidence" value="ECO:0007669"/>
    <property type="project" value="InterPro"/>
</dbReference>
<dbReference type="CDD" id="cd16444">
    <property type="entry name" value="LipB"/>
    <property type="match status" value="1"/>
</dbReference>
<dbReference type="Gene3D" id="3.30.930.10">
    <property type="entry name" value="Bira Bifunctional Protein, Domain 2"/>
    <property type="match status" value="1"/>
</dbReference>
<dbReference type="HAMAP" id="MF_00013">
    <property type="entry name" value="LipB"/>
    <property type="match status" value="1"/>
</dbReference>
<dbReference type="InterPro" id="IPR045864">
    <property type="entry name" value="aa-tRNA-synth_II/BPL/LPL"/>
</dbReference>
<dbReference type="InterPro" id="IPR004143">
    <property type="entry name" value="BPL_LPL_catalytic"/>
</dbReference>
<dbReference type="InterPro" id="IPR000544">
    <property type="entry name" value="Octanoyltransferase"/>
</dbReference>
<dbReference type="InterPro" id="IPR020605">
    <property type="entry name" value="Octanoyltransferase_CS"/>
</dbReference>
<dbReference type="NCBIfam" id="TIGR00214">
    <property type="entry name" value="lipB"/>
    <property type="match status" value="1"/>
</dbReference>
<dbReference type="NCBIfam" id="NF010925">
    <property type="entry name" value="PRK14345.1"/>
    <property type="match status" value="1"/>
</dbReference>
<dbReference type="PANTHER" id="PTHR10993:SF7">
    <property type="entry name" value="LIPOYLTRANSFERASE 2, MITOCHONDRIAL-RELATED"/>
    <property type="match status" value="1"/>
</dbReference>
<dbReference type="PANTHER" id="PTHR10993">
    <property type="entry name" value="OCTANOYLTRANSFERASE"/>
    <property type="match status" value="1"/>
</dbReference>
<dbReference type="Pfam" id="PF21948">
    <property type="entry name" value="LplA-B_cat"/>
    <property type="match status" value="1"/>
</dbReference>
<dbReference type="PIRSF" id="PIRSF016262">
    <property type="entry name" value="LPLase"/>
    <property type="match status" value="1"/>
</dbReference>
<dbReference type="SUPFAM" id="SSF55681">
    <property type="entry name" value="Class II aaRS and biotin synthetases"/>
    <property type="match status" value="1"/>
</dbReference>
<dbReference type="PROSITE" id="PS51733">
    <property type="entry name" value="BPL_LPL_CATALYTIC"/>
    <property type="match status" value="1"/>
</dbReference>
<dbReference type="PROSITE" id="PS01313">
    <property type="entry name" value="LIPB"/>
    <property type="match status" value="1"/>
</dbReference>
<sequence length="232" mass="24611">MVDIVVTGLSANSVPYIEALERQRALHADVVAGRAQDTVILLEHPSVYTAGRRTEPDDRPRDGTPVIDVDRGGRITWHGPGQLVGYPIVRLPEPLDVVAHVRRLEDALIALLAELGIASCRVDGRSGVWIRGTAPDGTPRDEKVAAIGVRVAERVTMHGFALNCSNALDAYDRIVPCGIRDAGVTSLSRVLGRTVTPADVVPLLRPHLVRALSNGSAMPATPALPSAAGARA</sequence>
<evidence type="ECO:0000255" key="1">
    <source>
        <dbReference type="HAMAP-Rule" id="MF_00013"/>
    </source>
</evidence>
<evidence type="ECO:0000255" key="2">
    <source>
        <dbReference type="PROSITE-ProRule" id="PRU01067"/>
    </source>
</evidence>
<proteinExistence type="inferred from homology"/>
<reference key="1">
    <citation type="journal article" date="2008" name="J. Bacteriol.">
        <title>Genome of the actinomycete plant pathogen Clavibacter michiganensis subsp. sepedonicus suggests recent niche adaptation.</title>
        <authorList>
            <person name="Bentley S.D."/>
            <person name="Corton C."/>
            <person name="Brown S.E."/>
            <person name="Barron A."/>
            <person name="Clark L."/>
            <person name="Doggett J."/>
            <person name="Harris B."/>
            <person name="Ormond D."/>
            <person name="Quail M.A."/>
            <person name="May G."/>
            <person name="Francis D."/>
            <person name="Knudson D."/>
            <person name="Parkhill J."/>
            <person name="Ishimaru C.A."/>
        </authorList>
    </citation>
    <scope>NUCLEOTIDE SEQUENCE [LARGE SCALE GENOMIC DNA]</scope>
    <source>
        <strain>ATCC 33113 / DSM 20744 / JCM 9667 / LMG 2889 / ICMP 2535 / C-1</strain>
    </source>
</reference>
<keyword id="KW-0012">Acyltransferase</keyword>
<keyword id="KW-0963">Cytoplasm</keyword>
<keyword id="KW-0808">Transferase</keyword>
<gene>
    <name evidence="1" type="primary">lipB</name>
    <name type="ordered locus">CMS1882</name>
</gene>